<protein>
    <recommendedName>
        <fullName evidence="1">Phosphoglucosamine mutase</fullName>
        <ecNumber evidence="1">5.4.2.10</ecNumber>
    </recommendedName>
</protein>
<accession>A0K6C4</accession>
<gene>
    <name evidence="1" type="primary">glmM</name>
    <name type="ordered locus">Bcen2424_1299</name>
</gene>
<feature type="chain" id="PRO_0000301289" description="Phosphoglucosamine mutase">
    <location>
        <begin position="1"/>
        <end position="451"/>
    </location>
</feature>
<feature type="active site" description="Phosphoserine intermediate" evidence="1">
    <location>
        <position position="107"/>
    </location>
</feature>
<feature type="binding site" description="via phosphate group" evidence="1">
    <location>
        <position position="107"/>
    </location>
    <ligand>
        <name>Mg(2+)</name>
        <dbReference type="ChEBI" id="CHEBI:18420"/>
    </ligand>
</feature>
<feature type="binding site" evidence="1">
    <location>
        <position position="246"/>
    </location>
    <ligand>
        <name>Mg(2+)</name>
        <dbReference type="ChEBI" id="CHEBI:18420"/>
    </ligand>
</feature>
<feature type="binding site" evidence="1">
    <location>
        <position position="248"/>
    </location>
    <ligand>
        <name>Mg(2+)</name>
        <dbReference type="ChEBI" id="CHEBI:18420"/>
    </ligand>
</feature>
<feature type="binding site" evidence="1">
    <location>
        <position position="250"/>
    </location>
    <ligand>
        <name>Mg(2+)</name>
        <dbReference type="ChEBI" id="CHEBI:18420"/>
    </ligand>
</feature>
<feature type="modified residue" description="Phosphoserine" evidence="1">
    <location>
        <position position="107"/>
    </location>
</feature>
<dbReference type="EC" id="5.4.2.10" evidence="1"/>
<dbReference type="EMBL" id="CP000458">
    <property type="protein sequence ID" value="ABK08051.1"/>
    <property type="molecule type" value="Genomic_DNA"/>
</dbReference>
<dbReference type="RefSeq" id="WP_011545088.1">
    <property type="nucleotide sequence ID" value="NC_008542.1"/>
</dbReference>
<dbReference type="SMR" id="A0K6C4"/>
<dbReference type="GeneID" id="83048063"/>
<dbReference type="KEGG" id="bch:Bcen2424_1299"/>
<dbReference type="HOGENOM" id="CLU_016950_7_0_4"/>
<dbReference type="GO" id="GO:0005829">
    <property type="term" value="C:cytosol"/>
    <property type="evidence" value="ECO:0007669"/>
    <property type="project" value="TreeGrafter"/>
</dbReference>
<dbReference type="GO" id="GO:0000287">
    <property type="term" value="F:magnesium ion binding"/>
    <property type="evidence" value="ECO:0007669"/>
    <property type="project" value="UniProtKB-UniRule"/>
</dbReference>
<dbReference type="GO" id="GO:0008966">
    <property type="term" value="F:phosphoglucosamine mutase activity"/>
    <property type="evidence" value="ECO:0007669"/>
    <property type="project" value="UniProtKB-UniRule"/>
</dbReference>
<dbReference type="GO" id="GO:0004615">
    <property type="term" value="F:phosphomannomutase activity"/>
    <property type="evidence" value="ECO:0007669"/>
    <property type="project" value="TreeGrafter"/>
</dbReference>
<dbReference type="GO" id="GO:0005975">
    <property type="term" value="P:carbohydrate metabolic process"/>
    <property type="evidence" value="ECO:0007669"/>
    <property type="project" value="InterPro"/>
</dbReference>
<dbReference type="GO" id="GO:0009252">
    <property type="term" value="P:peptidoglycan biosynthetic process"/>
    <property type="evidence" value="ECO:0007669"/>
    <property type="project" value="TreeGrafter"/>
</dbReference>
<dbReference type="GO" id="GO:0006048">
    <property type="term" value="P:UDP-N-acetylglucosamine biosynthetic process"/>
    <property type="evidence" value="ECO:0007669"/>
    <property type="project" value="TreeGrafter"/>
</dbReference>
<dbReference type="CDD" id="cd05802">
    <property type="entry name" value="GlmM"/>
    <property type="match status" value="1"/>
</dbReference>
<dbReference type="FunFam" id="3.30.310.50:FF:000001">
    <property type="entry name" value="Phosphoglucosamine mutase"/>
    <property type="match status" value="1"/>
</dbReference>
<dbReference type="FunFam" id="3.40.120.10:FF:000001">
    <property type="entry name" value="Phosphoglucosamine mutase"/>
    <property type="match status" value="1"/>
</dbReference>
<dbReference type="FunFam" id="3.40.120.10:FF:000003">
    <property type="entry name" value="Phosphoglucosamine mutase"/>
    <property type="match status" value="1"/>
</dbReference>
<dbReference type="Gene3D" id="3.40.120.10">
    <property type="entry name" value="Alpha-D-Glucose-1,6-Bisphosphate, subunit A, domain 3"/>
    <property type="match status" value="3"/>
</dbReference>
<dbReference type="Gene3D" id="3.30.310.50">
    <property type="entry name" value="Alpha-D-phosphohexomutase, C-terminal domain"/>
    <property type="match status" value="1"/>
</dbReference>
<dbReference type="HAMAP" id="MF_01554_B">
    <property type="entry name" value="GlmM_B"/>
    <property type="match status" value="1"/>
</dbReference>
<dbReference type="InterPro" id="IPR005844">
    <property type="entry name" value="A-D-PHexomutase_a/b/a-I"/>
</dbReference>
<dbReference type="InterPro" id="IPR016055">
    <property type="entry name" value="A-D-PHexomutase_a/b/a-I/II/III"/>
</dbReference>
<dbReference type="InterPro" id="IPR005845">
    <property type="entry name" value="A-D-PHexomutase_a/b/a-II"/>
</dbReference>
<dbReference type="InterPro" id="IPR005846">
    <property type="entry name" value="A-D-PHexomutase_a/b/a-III"/>
</dbReference>
<dbReference type="InterPro" id="IPR005843">
    <property type="entry name" value="A-D-PHexomutase_C"/>
</dbReference>
<dbReference type="InterPro" id="IPR036900">
    <property type="entry name" value="A-D-PHexomutase_C_sf"/>
</dbReference>
<dbReference type="InterPro" id="IPR016066">
    <property type="entry name" value="A-D-PHexomutase_CS"/>
</dbReference>
<dbReference type="InterPro" id="IPR005841">
    <property type="entry name" value="Alpha-D-phosphohexomutase_SF"/>
</dbReference>
<dbReference type="InterPro" id="IPR006352">
    <property type="entry name" value="GlmM_bact"/>
</dbReference>
<dbReference type="InterPro" id="IPR050060">
    <property type="entry name" value="Phosphoglucosamine_mutase"/>
</dbReference>
<dbReference type="NCBIfam" id="TIGR01455">
    <property type="entry name" value="glmM"/>
    <property type="match status" value="1"/>
</dbReference>
<dbReference type="NCBIfam" id="NF008139">
    <property type="entry name" value="PRK10887.1"/>
    <property type="match status" value="1"/>
</dbReference>
<dbReference type="PANTHER" id="PTHR42946:SF1">
    <property type="entry name" value="PHOSPHOGLUCOMUTASE (ALPHA-D-GLUCOSE-1,6-BISPHOSPHATE-DEPENDENT)"/>
    <property type="match status" value="1"/>
</dbReference>
<dbReference type="PANTHER" id="PTHR42946">
    <property type="entry name" value="PHOSPHOHEXOSE MUTASE"/>
    <property type="match status" value="1"/>
</dbReference>
<dbReference type="Pfam" id="PF02878">
    <property type="entry name" value="PGM_PMM_I"/>
    <property type="match status" value="1"/>
</dbReference>
<dbReference type="Pfam" id="PF02879">
    <property type="entry name" value="PGM_PMM_II"/>
    <property type="match status" value="1"/>
</dbReference>
<dbReference type="Pfam" id="PF02880">
    <property type="entry name" value="PGM_PMM_III"/>
    <property type="match status" value="1"/>
</dbReference>
<dbReference type="Pfam" id="PF00408">
    <property type="entry name" value="PGM_PMM_IV"/>
    <property type="match status" value="1"/>
</dbReference>
<dbReference type="PRINTS" id="PR00509">
    <property type="entry name" value="PGMPMM"/>
</dbReference>
<dbReference type="SUPFAM" id="SSF55957">
    <property type="entry name" value="Phosphoglucomutase, C-terminal domain"/>
    <property type="match status" value="1"/>
</dbReference>
<dbReference type="SUPFAM" id="SSF53738">
    <property type="entry name" value="Phosphoglucomutase, first 3 domains"/>
    <property type="match status" value="3"/>
</dbReference>
<dbReference type="PROSITE" id="PS00710">
    <property type="entry name" value="PGM_PMM"/>
    <property type="match status" value="1"/>
</dbReference>
<evidence type="ECO:0000255" key="1">
    <source>
        <dbReference type="HAMAP-Rule" id="MF_01554"/>
    </source>
</evidence>
<comment type="function">
    <text evidence="1">Catalyzes the conversion of glucosamine-6-phosphate to glucosamine-1-phosphate.</text>
</comment>
<comment type="catalytic activity">
    <reaction evidence="1">
        <text>alpha-D-glucosamine 1-phosphate = D-glucosamine 6-phosphate</text>
        <dbReference type="Rhea" id="RHEA:23424"/>
        <dbReference type="ChEBI" id="CHEBI:58516"/>
        <dbReference type="ChEBI" id="CHEBI:58725"/>
        <dbReference type="EC" id="5.4.2.10"/>
    </reaction>
</comment>
<comment type="cofactor">
    <cofactor evidence="1">
        <name>Mg(2+)</name>
        <dbReference type="ChEBI" id="CHEBI:18420"/>
    </cofactor>
    <text evidence="1">Binds 1 Mg(2+) ion per subunit.</text>
</comment>
<comment type="PTM">
    <text evidence="1">Activated by phosphorylation.</text>
</comment>
<comment type="similarity">
    <text evidence="1">Belongs to the phosphohexose mutase family.</text>
</comment>
<name>GLMM_BURCH</name>
<organism>
    <name type="scientific">Burkholderia cenocepacia (strain HI2424)</name>
    <dbReference type="NCBI Taxonomy" id="331272"/>
    <lineage>
        <taxon>Bacteria</taxon>
        <taxon>Pseudomonadati</taxon>
        <taxon>Pseudomonadota</taxon>
        <taxon>Betaproteobacteria</taxon>
        <taxon>Burkholderiales</taxon>
        <taxon>Burkholderiaceae</taxon>
        <taxon>Burkholderia</taxon>
        <taxon>Burkholderia cepacia complex</taxon>
    </lineage>
</organism>
<keyword id="KW-0413">Isomerase</keyword>
<keyword id="KW-0460">Magnesium</keyword>
<keyword id="KW-0479">Metal-binding</keyword>
<keyword id="KW-0597">Phosphoprotein</keyword>
<reference key="1">
    <citation type="submission" date="2006-08" db="EMBL/GenBank/DDBJ databases">
        <title>Complete sequence of chromosome 1 of Burkholderia cenocepacia HI2424.</title>
        <authorList>
            <person name="Copeland A."/>
            <person name="Lucas S."/>
            <person name="Lapidus A."/>
            <person name="Barry K."/>
            <person name="Detter J.C."/>
            <person name="Glavina del Rio T."/>
            <person name="Hammon N."/>
            <person name="Israni S."/>
            <person name="Pitluck S."/>
            <person name="Chain P."/>
            <person name="Malfatti S."/>
            <person name="Shin M."/>
            <person name="Vergez L."/>
            <person name="Schmutz J."/>
            <person name="Larimer F."/>
            <person name="Land M."/>
            <person name="Hauser L."/>
            <person name="Kyrpides N."/>
            <person name="Kim E."/>
            <person name="LiPuma J.J."/>
            <person name="Gonzalez C.F."/>
            <person name="Konstantinidis K."/>
            <person name="Tiedje J.M."/>
            <person name="Richardson P."/>
        </authorList>
    </citation>
    <scope>NUCLEOTIDE SEQUENCE [LARGE SCALE GENOMIC DNA]</scope>
    <source>
        <strain>HI2424</strain>
    </source>
</reference>
<sequence length="451" mass="47127">MGRRYFGTDGIRGTVGEAPITPDFVLRLGYAAGKVLAGSADVAAGSRPTVLIGKDTRVSGYMLEAALEAGFSAAGVDVMLAGPMPTPGVAYLTRALRLSAGVVISASHNPYHDNGIKFFSADGNKLPDDTEAAIEAWLDKPLECAPSDGLGKARRLDDAAGRYIEFCKSTFPAAFDLRGLKLVIDCAHGAAYQIAPHVFHELGADVIPIGVAPNGFNINDGVGATAPDALVRAVRANHADLGIALDGDADRLQVVDATGRLYNGDELLYVLVKDRIATDGKVDGAVGTLMTNLAVEVALQREGVKFVRAAVGDRYVLEQLREHGWQLGAEGSGHILSLDRHSTGDGIVSALLVLAALKRSGRTLAQVLDGVTLFPQKLINVRMKPGADWKGSASIRAAIDAAEAALAGSGRVLIRASGTEPVLRVMVEAQQAADAVRHAETIADAVRAATT</sequence>
<proteinExistence type="inferred from homology"/>